<keyword id="KW-0963">Cytoplasm</keyword>
<keyword id="KW-0227">DNA damage</keyword>
<keyword id="KW-0233">DNA recombination</keyword>
<keyword id="KW-0234">DNA repair</keyword>
<keyword id="KW-0238">DNA-binding</keyword>
<keyword id="KW-0255">Endonuclease</keyword>
<keyword id="KW-0378">Hydrolase</keyword>
<keyword id="KW-0460">Magnesium</keyword>
<keyword id="KW-0479">Metal-binding</keyword>
<keyword id="KW-0540">Nuclease</keyword>
<keyword id="KW-1185">Reference proteome</keyword>
<organism>
    <name type="scientific">Campylobacter hominis (strain ATCC BAA-381 / DSM 21671 / CCUG 45161 / LMG 19568 / NCTC 13146 / CH001A)</name>
    <dbReference type="NCBI Taxonomy" id="360107"/>
    <lineage>
        <taxon>Bacteria</taxon>
        <taxon>Pseudomonadati</taxon>
        <taxon>Campylobacterota</taxon>
        <taxon>Epsilonproteobacteria</taxon>
        <taxon>Campylobacterales</taxon>
        <taxon>Campylobacteraceae</taxon>
        <taxon>Campylobacter</taxon>
    </lineage>
</organism>
<comment type="function">
    <text evidence="1">The RuvA-RuvB-RuvC complex processes Holliday junction (HJ) DNA during genetic recombination and DNA repair. Endonuclease that resolves HJ intermediates. Cleaves cruciform DNA by making single-stranded nicks across the HJ at symmetrical positions within the homologous arms, yielding a 5'-phosphate and a 3'-hydroxyl group; requires a central core of homology in the junction. The consensus cleavage sequence is 5'-(A/T)TT(C/G)-3'. Cleavage occurs on the 3'-side of the TT dinucleotide at the point of strand exchange. HJ branch migration catalyzed by RuvA-RuvB allows RuvC to scan DNA until it finds its consensus sequence, where it cleaves and resolves the cruciform DNA.</text>
</comment>
<comment type="catalytic activity">
    <reaction evidence="1">
        <text>Endonucleolytic cleavage at a junction such as a reciprocal single-stranded crossover between two homologous DNA duplexes (Holliday junction).</text>
        <dbReference type="EC" id="3.1.21.10"/>
    </reaction>
</comment>
<comment type="cofactor">
    <cofactor evidence="1">
        <name>Mg(2+)</name>
        <dbReference type="ChEBI" id="CHEBI:18420"/>
    </cofactor>
    <text evidence="1">Binds 2 Mg(2+) ion per subunit.</text>
</comment>
<comment type="subunit">
    <text evidence="1">Homodimer which binds Holliday junction (HJ) DNA. The HJ becomes 2-fold symmetrical on binding to RuvC with unstacked arms; it has a different conformation from HJ DNA in complex with RuvA. In the full resolvosome a probable DNA-RuvA(4)-RuvB(12)-RuvC(2) complex forms which resolves the HJ.</text>
</comment>
<comment type="subcellular location">
    <subcellularLocation>
        <location evidence="1">Cytoplasm</location>
    </subcellularLocation>
</comment>
<comment type="similarity">
    <text evidence="1">Belongs to the RuvC family.</text>
</comment>
<dbReference type="EC" id="3.1.21.10" evidence="1"/>
<dbReference type="EMBL" id="CP000776">
    <property type="protein sequence ID" value="ABS52152.1"/>
    <property type="molecule type" value="Genomic_DNA"/>
</dbReference>
<dbReference type="RefSeq" id="WP_012109611.1">
    <property type="nucleotide sequence ID" value="NC_009714.1"/>
</dbReference>
<dbReference type="SMR" id="A7I463"/>
<dbReference type="STRING" id="360107.CHAB381_1794"/>
<dbReference type="KEGG" id="cha:CHAB381_1794"/>
<dbReference type="eggNOG" id="COG0817">
    <property type="taxonomic scope" value="Bacteria"/>
</dbReference>
<dbReference type="HOGENOM" id="CLU_091257_3_0_7"/>
<dbReference type="OrthoDB" id="9805499at2"/>
<dbReference type="Proteomes" id="UP000002407">
    <property type="component" value="Chromosome"/>
</dbReference>
<dbReference type="GO" id="GO:0005737">
    <property type="term" value="C:cytoplasm"/>
    <property type="evidence" value="ECO:0007669"/>
    <property type="project" value="UniProtKB-SubCell"/>
</dbReference>
<dbReference type="GO" id="GO:0048476">
    <property type="term" value="C:Holliday junction resolvase complex"/>
    <property type="evidence" value="ECO:0007669"/>
    <property type="project" value="UniProtKB-UniRule"/>
</dbReference>
<dbReference type="GO" id="GO:0008821">
    <property type="term" value="F:crossover junction DNA endonuclease activity"/>
    <property type="evidence" value="ECO:0007669"/>
    <property type="project" value="UniProtKB-UniRule"/>
</dbReference>
<dbReference type="GO" id="GO:0003677">
    <property type="term" value="F:DNA binding"/>
    <property type="evidence" value="ECO:0007669"/>
    <property type="project" value="UniProtKB-KW"/>
</dbReference>
<dbReference type="GO" id="GO:0000287">
    <property type="term" value="F:magnesium ion binding"/>
    <property type="evidence" value="ECO:0007669"/>
    <property type="project" value="UniProtKB-UniRule"/>
</dbReference>
<dbReference type="GO" id="GO:0006310">
    <property type="term" value="P:DNA recombination"/>
    <property type="evidence" value="ECO:0007669"/>
    <property type="project" value="UniProtKB-UniRule"/>
</dbReference>
<dbReference type="GO" id="GO:0006281">
    <property type="term" value="P:DNA repair"/>
    <property type="evidence" value="ECO:0007669"/>
    <property type="project" value="UniProtKB-UniRule"/>
</dbReference>
<dbReference type="CDD" id="cd16962">
    <property type="entry name" value="RuvC"/>
    <property type="match status" value="1"/>
</dbReference>
<dbReference type="FunFam" id="3.30.420.10:FF:000002">
    <property type="entry name" value="Crossover junction endodeoxyribonuclease RuvC"/>
    <property type="match status" value="1"/>
</dbReference>
<dbReference type="Gene3D" id="3.30.420.10">
    <property type="entry name" value="Ribonuclease H-like superfamily/Ribonuclease H"/>
    <property type="match status" value="1"/>
</dbReference>
<dbReference type="HAMAP" id="MF_00034">
    <property type="entry name" value="RuvC"/>
    <property type="match status" value="1"/>
</dbReference>
<dbReference type="InterPro" id="IPR012337">
    <property type="entry name" value="RNaseH-like_sf"/>
</dbReference>
<dbReference type="InterPro" id="IPR036397">
    <property type="entry name" value="RNaseH_sf"/>
</dbReference>
<dbReference type="InterPro" id="IPR020563">
    <property type="entry name" value="X-over_junc_endoDNase_Mg_BS"/>
</dbReference>
<dbReference type="InterPro" id="IPR002176">
    <property type="entry name" value="X-over_junc_endoDNase_RuvC"/>
</dbReference>
<dbReference type="NCBIfam" id="TIGR00228">
    <property type="entry name" value="ruvC"/>
    <property type="match status" value="1"/>
</dbReference>
<dbReference type="PANTHER" id="PTHR30194">
    <property type="entry name" value="CROSSOVER JUNCTION ENDODEOXYRIBONUCLEASE RUVC"/>
    <property type="match status" value="1"/>
</dbReference>
<dbReference type="PANTHER" id="PTHR30194:SF3">
    <property type="entry name" value="CROSSOVER JUNCTION ENDODEOXYRIBONUCLEASE RUVC"/>
    <property type="match status" value="1"/>
</dbReference>
<dbReference type="Pfam" id="PF02075">
    <property type="entry name" value="RuvC"/>
    <property type="match status" value="1"/>
</dbReference>
<dbReference type="PRINTS" id="PR00696">
    <property type="entry name" value="RSOLVASERUVC"/>
</dbReference>
<dbReference type="SUPFAM" id="SSF53098">
    <property type="entry name" value="Ribonuclease H-like"/>
    <property type="match status" value="1"/>
</dbReference>
<dbReference type="PROSITE" id="PS01321">
    <property type="entry name" value="RUVC"/>
    <property type="match status" value="1"/>
</dbReference>
<protein>
    <recommendedName>
        <fullName evidence="1">Crossover junction endodeoxyribonuclease RuvC</fullName>
        <ecNumber evidence="1">3.1.21.10</ecNumber>
    </recommendedName>
    <alternativeName>
        <fullName evidence="1">Holliday junction nuclease RuvC</fullName>
    </alternativeName>
    <alternativeName>
        <fullName evidence="1">Holliday junction resolvase RuvC</fullName>
    </alternativeName>
</protein>
<name>RUVC_CAMHC</name>
<reference key="1">
    <citation type="submission" date="2007-07" db="EMBL/GenBank/DDBJ databases">
        <title>Complete genome sequence of Campylobacter hominis ATCC BAA-381, a commensal isolated from the human gastrointestinal tract.</title>
        <authorList>
            <person name="Fouts D.E."/>
            <person name="Mongodin E.F."/>
            <person name="Puiu D."/>
            <person name="Sebastian Y."/>
            <person name="Miller W.G."/>
            <person name="Mandrell R.E."/>
            <person name="Nelson K.E."/>
        </authorList>
    </citation>
    <scope>NUCLEOTIDE SEQUENCE [LARGE SCALE GENOMIC DNA]</scope>
    <source>
        <strain>ATCC BAA-381 / DSM 21671 / CCUG 45161 / LMG 19568 / NCTC 13146 / CH001A</strain>
    </source>
</reference>
<accession>A7I463</accession>
<proteinExistence type="inferred from homology"/>
<evidence type="ECO:0000255" key="1">
    <source>
        <dbReference type="HAMAP-Rule" id="MF_00034"/>
    </source>
</evidence>
<sequence>MKILGIDPGTRNMGYAVLEKNVNKISLIEAGLIKMKPENLQFQLTQMCEAIDQIFEFHKIDEVAIESMFYAYNPQSVLKLAQFRGGLSLKILQVFGNFAEYTPLQIKKNVTGKAKADKTQVAFMVKKMLGISKDIKPLDVTDAIAIAITHAHNLRGVK</sequence>
<gene>
    <name evidence="1" type="primary">ruvC</name>
    <name type="ordered locus">CHAB381_1794</name>
</gene>
<feature type="chain" id="PRO_1000002739" description="Crossover junction endodeoxyribonuclease RuvC">
    <location>
        <begin position="1"/>
        <end position="158"/>
    </location>
</feature>
<feature type="active site" evidence="1">
    <location>
        <position position="7"/>
    </location>
</feature>
<feature type="active site" evidence="1">
    <location>
        <position position="66"/>
    </location>
</feature>
<feature type="active site" evidence="1">
    <location>
        <position position="139"/>
    </location>
</feature>
<feature type="binding site" evidence="1">
    <location>
        <position position="7"/>
    </location>
    <ligand>
        <name>Mg(2+)</name>
        <dbReference type="ChEBI" id="CHEBI:18420"/>
        <label>1</label>
    </ligand>
</feature>
<feature type="binding site" evidence="1">
    <location>
        <position position="66"/>
    </location>
    <ligand>
        <name>Mg(2+)</name>
        <dbReference type="ChEBI" id="CHEBI:18420"/>
        <label>2</label>
    </ligand>
</feature>
<feature type="binding site" evidence="1">
    <location>
        <position position="139"/>
    </location>
    <ligand>
        <name>Mg(2+)</name>
        <dbReference type="ChEBI" id="CHEBI:18420"/>
        <label>1</label>
    </ligand>
</feature>